<reference key="1">
    <citation type="journal article" date="2009" name="J. Bacteriol.">
        <title>Complete genome sequence and comparative genome analysis of enteropathogenic Escherichia coli O127:H6 strain E2348/69.</title>
        <authorList>
            <person name="Iguchi A."/>
            <person name="Thomson N.R."/>
            <person name="Ogura Y."/>
            <person name="Saunders D."/>
            <person name="Ooka T."/>
            <person name="Henderson I.R."/>
            <person name="Harris D."/>
            <person name="Asadulghani M."/>
            <person name="Kurokawa K."/>
            <person name="Dean P."/>
            <person name="Kenny B."/>
            <person name="Quail M.A."/>
            <person name="Thurston S."/>
            <person name="Dougan G."/>
            <person name="Hayashi T."/>
            <person name="Parkhill J."/>
            <person name="Frankel G."/>
        </authorList>
    </citation>
    <scope>NUCLEOTIDE SEQUENCE [LARGE SCALE GENOMIC DNA]</scope>
    <source>
        <strain>E2348/69 / EPEC</strain>
    </source>
</reference>
<keyword id="KW-0119">Carbohydrate metabolism</keyword>
<keyword id="KW-0413">Isomerase</keyword>
<keyword id="KW-1185">Reference proteome</keyword>
<gene>
    <name evidence="1" type="primary">nanE</name>
    <name type="ordered locus">E2348C_3495</name>
</gene>
<dbReference type="EC" id="5.1.3.9" evidence="1"/>
<dbReference type="EMBL" id="FM180568">
    <property type="protein sequence ID" value="CAS11043.1"/>
    <property type="molecule type" value="Genomic_DNA"/>
</dbReference>
<dbReference type="RefSeq" id="WP_012579008.1">
    <property type="nucleotide sequence ID" value="NC_011601.1"/>
</dbReference>
<dbReference type="SMR" id="B7UJV6"/>
<dbReference type="KEGG" id="ecg:E2348C_3495"/>
<dbReference type="HOGENOM" id="CLU_086300_0_0_6"/>
<dbReference type="UniPathway" id="UPA00629">
    <property type="reaction ID" value="UER00682"/>
</dbReference>
<dbReference type="Proteomes" id="UP000008205">
    <property type="component" value="Chromosome"/>
</dbReference>
<dbReference type="GO" id="GO:0005829">
    <property type="term" value="C:cytosol"/>
    <property type="evidence" value="ECO:0007669"/>
    <property type="project" value="TreeGrafter"/>
</dbReference>
<dbReference type="GO" id="GO:0047465">
    <property type="term" value="F:N-acylglucosamine-6-phosphate 2-epimerase activity"/>
    <property type="evidence" value="ECO:0007669"/>
    <property type="project" value="UniProtKB-EC"/>
</dbReference>
<dbReference type="GO" id="GO:0005975">
    <property type="term" value="P:carbohydrate metabolic process"/>
    <property type="evidence" value="ECO:0007669"/>
    <property type="project" value="UniProtKB-UniRule"/>
</dbReference>
<dbReference type="GO" id="GO:0006053">
    <property type="term" value="P:N-acetylmannosamine catabolic process"/>
    <property type="evidence" value="ECO:0007669"/>
    <property type="project" value="TreeGrafter"/>
</dbReference>
<dbReference type="GO" id="GO:0019262">
    <property type="term" value="P:N-acetylneuraminate catabolic process"/>
    <property type="evidence" value="ECO:0007669"/>
    <property type="project" value="UniProtKB-UniRule"/>
</dbReference>
<dbReference type="CDD" id="cd04729">
    <property type="entry name" value="NanE"/>
    <property type="match status" value="1"/>
</dbReference>
<dbReference type="FunFam" id="3.20.20.70:FF:000035">
    <property type="entry name" value="Putative N-acetylmannosamine-6-phosphate 2-epimerase"/>
    <property type="match status" value="1"/>
</dbReference>
<dbReference type="Gene3D" id="3.20.20.70">
    <property type="entry name" value="Aldolase class I"/>
    <property type="match status" value="1"/>
</dbReference>
<dbReference type="HAMAP" id="MF_01235">
    <property type="entry name" value="ManNAc6P_epimer"/>
    <property type="match status" value="1"/>
</dbReference>
<dbReference type="InterPro" id="IPR013785">
    <property type="entry name" value="Aldolase_TIM"/>
</dbReference>
<dbReference type="InterPro" id="IPR007260">
    <property type="entry name" value="NanE"/>
</dbReference>
<dbReference type="InterPro" id="IPR011060">
    <property type="entry name" value="RibuloseP-bd_barrel"/>
</dbReference>
<dbReference type="NCBIfam" id="NF002231">
    <property type="entry name" value="PRK01130.1"/>
    <property type="match status" value="1"/>
</dbReference>
<dbReference type="PANTHER" id="PTHR36204">
    <property type="entry name" value="N-ACETYLMANNOSAMINE-6-PHOSPHATE 2-EPIMERASE-RELATED"/>
    <property type="match status" value="1"/>
</dbReference>
<dbReference type="PANTHER" id="PTHR36204:SF1">
    <property type="entry name" value="N-ACETYLMANNOSAMINE-6-PHOSPHATE 2-EPIMERASE-RELATED"/>
    <property type="match status" value="1"/>
</dbReference>
<dbReference type="Pfam" id="PF04131">
    <property type="entry name" value="NanE"/>
    <property type="match status" value="1"/>
</dbReference>
<dbReference type="SUPFAM" id="SSF51366">
    <property type="entry name" value="Ribulose-phoshate binding barrel"/>
    <property type="match status" value="1"/>
</dbReference>
<feature type="chain" id="PRO_1000164991" description="Putative N-acetylmannosamine-6-phosphate 2-epimerase">
    <location>
        <begin position="1"/>
        <end position="229"/>
    </location>
</feature>
<organism>
    <name type="scientific">Escherichia coli O127:H6 (strain E2348/69 / EPEC)</name>
    <dbReference type="NCBI Taxonomy" id="574521"/>
    <lineage>
        <taxon>Bacteria</taxon>
        <taxon>Pseudomonadati</taxon>
        <taxon>Pseudomonadota</taxon>
        <taxon>Gammaproteobacteria</taxon>
        <taxon>Enterobacterales</taxon>
        <taxon>Enterobacteriaceae</taxon>
        <taxon>Escherichia</taxon>
    </lineage>
</organism>
<evidence type="ECO:0000255" key="1">
    <source>
        <dbReference type="HAMAP-Rule" id="MF_01235"/>
    </source>
</evidence>
<protein>
    <recommendedName>
        <fullName evidence="1">Putative N-acetylmannosamine-6-phosphate 2-epimerase</fullName>
        <ecNumber evidence="1">5.1.3.9</ecNumber>
    </recommendedName>
    <alternativeName>
        <fullName evidence="1">ManNAc-6-P epimerase</fullName>
    </alternativeName>
</protein>
<accession>B7UJV6</accession>
<sequence>MSLLAQLDQKIAANGGLIVSCQPVPDSPLDKPEIVAAMALAAEQAGAVAIRIEGVANLQATRAVVSVPIIGIVKRDLEDSPVRITAYIEDVDALAQAGADIIAIDGTDRPRPVPVETLLARIHHHGLLAMTDCSTPEDGLACQKLGAEIIGTTLSGYTTPETPEEPDLALVKTLSDAGCRVIAEGRYNTPAQAADAMRHGAWAVTVGSAITRLEHICQWYNTVMKKAVL</sequence>
<name>NANE_ECO27</name>
<comment type="function">
    <text evidence="1">Converts N-acetylmannosamine-6-phosphate (ManNAc-6-P) to N-acetylglucosamine-6-phosphate (GlcNAc-6-P).</text>
</comment>
<comment type="catalytic activity">
    <reaction evidence="1">
        <text>an N-acyl-D-glucosamine 6-phosphate = an N-acyl-D-mannosamine 6-phosphate</text>
        <dbReference type="Rhea" id="RHEA:23932"/>
        <dbReference type="ChEBI" id="CHEBI:57599"/>
        <dbReference type="ChEBI" id="CHEBI:57666"/>
        <dbReference type="EC" id="5.1.3.9"/>
    </reaction>
</comment>
<comment type="pathway">
    <text evidence="1">Amino-sugar metabolism; N-acetylneuraminate degradation; D-fructose 6-phosphate from N-acetylneuraminate: step 3/5.</text>
</comment>
<comment type="similarity">
    <text evidence="1">Belongs to the NanE family.</text>
</comment>
<proteinExistence type="inferred from homology"/>